<name>RS18_BIFAA</name>
<reference key="1">
    <citation type="submission" date="2006-12" db="EMBL/GenBank/DDBJ databases">
        <title>Bifidobacterium adolescentis complete genome sequence.</title>
        <authorList>
            <person name="Suzuki T."/>
            <person name="Tsuda Y."/>
            <person name="Kanou N."/>
            <person name="Inoue T."/>
            <person name="Kumazaki K."/>
            <person name="Nagano S."/>
            <person name="Hirai S."/>
            <person name="Tanaka K."/>
            <person name="Watanabe K."/>
        </authorList>
    </citation>
    <scope>NUCLEOTIDE SEQUENCE [LARGE SCALE GENOMIC DNA]</scope>
    <source>
        <strain>ATCC 15703 / DSM 20083 / NCTC 11814 / E194a</strain>
    </source>
</reference>
<keyword id="KW-1185">Reference proteome</keyword>
<keyword id="KW-0687">Ribonucleoprotein</keyword>
<keyword id="KW-0689">Ribosomal protein</keyword>
<keyword id="KW-0694">RNA-binding</keyword>
<keyword id="KW-0699">rRNA-binding</keyword>
<proteinExistence type="inferred from homology"/>
<sequence>MSRKRPQPPVKPFKKKPNPLKAAKVTEIDYKDVALLRKFISDRGKIRSRRITGVTVQEQREISKAIKNAREMALLPYATSGR</sequence>
<protein>
    <recommendedName>
        <fullName evidence="1">Small ribosomal subunit protein bS18</fullName>
    </recommendedName>
    <alternativeName>
        <fullName evidence="2">30S ribosomal protein S18</fullName>
    </alternativeName>
</protein>
<accession>A1A3H9</accession>
<feature type="chain" id="PRO_1000003448" description="Small ribosomal subunit protein bS18">
    <location>
        <begin position="1"/>
        <end position="82"/>
    </location>
</feature>
<dbReference type="EMBL" id="AP009256">
    <property type="protein sequence ID" value="BAF40262.1"/>
    <property type="molecule type" value="Genomic_DNA"/>
</dbReference>
<dbReference type="RefSeq" id="WP_003810112.1">
    <property type="nucleotide sequence ID" value="NZ_CAXVNC010000003.1"/>
</dbReference>
<dbReference type="SMR" id="A1A3H9"/>
<dbReference type="STRING" id="367928.BAD_1481"/>
<dbReference type="PaxDb" id="1680-BADO_1537"/>
<dbReference type="GeneID" id="92942387"/>
<dbReference type="KEGG" id="bad:BAD_1481"/>
<dbReference type="HOGENOM" id="CLU_148710_1_0_11"/>
<dbReference type="Proteomes" id="UP000008702">
    <property type="component" value="Chromosome"/>
</dbReference>
<dbReference type="GO" id="GO:0022627">
    <property type="term" value="C:cytosolic small ribosomal subunit"/>
    <property type="evidence" value="ECO:0007669"/>
    <property type="project" value="TreeGrafter"/>
</dbReference>
<dbReference type="GO" id="GO:0070181">
    <property type="term" value="F:small ribosomal subunit rRNA binding"/>
    <property type="evidence" value="ECO:0007669"/>
    <property type="project" value="TreeGrafter"/>
</dbReference>
<dbReference type="GO" id="GO:0003735">
    <property type="term" value="F:structural constituent of ribosome"/>
    <property type="evidence" value="ECO:0007669"/>
    <property type="project" value="InterPro"/>
</dbReference>
<dbReference type="GO" id="GO:0006412">
    <property type="term" value="P:translation"/>
    <property type="evidence" value="ECO:0007669"/>
    <property type="project" value="UniProtKB-UniRule"/>
</dbReference>
<dbReference type="FunFam" id="4.10.640.10:FF:000016">
    <property type="entry name" value="30S ribosomal protein S18"/>
    <property type="match status" value="1"/>
</dbReference>
<dbReference type="Gene3D" id="4.10.640.10">
    <property type="entry name" value="Ribosomal protein S18"/>
    <property type="match status" value="1"/>
</dbReference>
<dbReference type="HAMAP" id="MF_00270">
    <property type="entry name" value="Ribosomal_bS18"/>
    <property type="match status" value="1"/>
</dbReference>
<dbReference type="InterPro" id="IPR001648">
    <property type="entry name" value="Ribosomal_bS18"/>
</dbReference>
<dbReference type="InterPro" id="IPR018275">
    <property type="entry name" value="Ribosomal_bS18_CS"/>
</dbReference>
<dbReference type="InterPro" id="IPR036870">
    <property type="entry name" value="Ribosomal_bS18_sf"/>
</dbReference>
<dbReference type="NCBIfam" id="TIGR00165">
    <property type="entry name" value="S18"/>
    <property type="match status" value="1"/>
</dbReference>
<dbReference type="PANTHER" id="PTHR13479">
    <property type="entry name" value="30S RIBOSOMAL PROTEIN S18"/>
    <property type="match status" value="1"/>
</dbReference>
<dbReference type="PANTHER" id="PTHR13479:SF40">
    <property type="entry name" value="SMALL RIBOSOMAL SUBUNIT PROTEIN BS18M"/>
    <property type="match status" value="1"/>
</dbReference>
<dbReference type="Pfam" id="PF01084">
    <property type="entry name" value="Ribosomal_S18"/>
    <property type="match status" value="1"/>
</dbReference>
<dbReference type="PRINTS" id="PR00974">
    <property type="entry name" value="RIBOSOMALS18"/>
</dbReference>
<dbReference type="SUPFAM" id="SSF46911">
    <property type="entry name" value="Ribosomal protein S18"/>
    <property type="match status" value="1"/>
</dbReference>
<dbReference type="PROSITE" id="PS00057">
    <property type="entry name" value="RIBOSOMAL_S18"/>
    <property type="match status" value="1"/>
</dbReference>
<comment type="function">
    <text evidence="1">Binds as a heterodimer with protein bS6 to the central domain of the 16S rRNA, where it helps stabilize the platform of the 30S subunit.</text>
</comment>
<comment type="subunit">
    <text evidence="1">Part of the 30S ribosomal subunit. Forms a tight heterodimer with protein bS6.</text>
</comment>
<comment type="similarity">
    <text evidence="1">Belongs to the bacterial ribosomal protein bS18 family.</text>
</comment>
<gene>
    <name evidence="1" type="primary">rpsR</name>
    <name type="ordered locus">BAD_1481</name>
</gene>
<evidence type="ECO:0000255" key="1">
    <source>
        <dbReference type="HAMAP-Rule" id="MF_00270"/>
    </source>
</evidence>
<evidence type="ECO:0000305" key="2"/>
<organism>
    <name type="scientific">Bifidobacterium adolescentis (strain ATCC 15703 / DSM 20083 / NCTC 11814 / E194a)</name>
    <dbReference type="NCBI Taxonomy" id="367928"/>
    <lineage>
        <taxon>Bacteria</taxon>
        <taxon>Bacillati</taxon>
        <taxon>Actinomycetota</taxon>
        <taxon>Actinomycetes</taxon>
        <taxon>Bifidobacteriales</taxon>
        <taxon>Bifidobacteriaceae</taxon>
        <taxon>Bifidobacterium</taxon>
    </lineage>
</organism>